<name>Y1201_CAUVC</name>
<feature type="chain" id="PRO_0000162934" description="Putative aldolase class 2 protein CC_1201">
    <location>
        <begin position="1"/>
        <end position="257"/>
    </location>
</feature>
<feature type="binding site" evidence="1">
    <location>
        <position position="114"/>
    </location>
    <ligand>
        <name>Zn(2+)</name>
        <dbReference type="ChEBI" id="CHEBI:29105"/>
    </ligand>
</feature>
<feature type="binding site" evidence="1">
    <location>
        <position position="116"/>
    </location>
    <ligand>
        <name>Zn(2+)</name>
        <dbReference type="ChEBI" id="CHEBI:29105"/>
    </ligand>
</feature>
<feature type="binding site" evidence="1">
    <location>
        <position position="177"/>
    </location>
    <ligand>
        <name>Zn(2+)</name>
        <dbReference type="ChEBI" id="CHEBI:29105"/>
    </ligand>
</feature>
<protein>
    <recommendedName>
        <fullName>Putative aldolase class 2 protein CC_1201</fullName>
    </recommendedName>
</protein>
<keyword id="KW-0479">Metal-binding</keyword>
<keyword id="KW-1185">Reference proteome</keyword>
<keyword id="KW-0862">Zinc</keyword>
<reference key="1">
    <citation type="journal article" date="2001" name="Proc. Natl. Acad. Sci. U.S.A.">
        <title>Complete genome sequence of Caulobacter crescentus.</title>
        <authorList>
            <person name="Nierman W.C."/>
            <person name="Feldblyum T.V."/>
            <person name="Laub M.T."/>
            <person name="Paulsen I.T."/>
            <person name="Nelson K.E."/>
            <person name="Eisen J.A."/>
            <person name="Heidelberg J.F."/>
            <person name="Alley M.R.K."/>
            <person name="Ohta N."/>
            <person name="Maddock J.R."/>
            <person name="Potocka I."/>
            <person name="Nelson W.C."/>
            <person name="Newton A."/>
            <person name="Stephens C."/>
            <person name="Phadke N.D."/>
            <person name="Ely B."/>
            <person name="DeBoy R.T."/>
            <person name="Dodson R.J."/>
            <person name="Durkin A.S."/>
            <person name="Gwinn M.L."/>
            <person name="Haft D.H."/>
            <person name="Kolonay J.F."/>
            <person name="Smit J."/>
            <person name="Craven M.B."/>
            <person name="Khouri H.M."/>
            <person name="Shetty J."/>
            <person name="Berry K.J."/>
            <person name="Utterback T.R."/>
            <person name="Tran K."/>
            <person name="Wolf A.M."/>
            <person name="Vamathevan J.J."/>
            <person name="Ermolaeva M.D."/>
            <person name="White O."/>
            <person name="Salzberg S.L."/>
            <person name="Venter J.C."/>
            <person name="Shapiro L."/>
            <person name="Fraser C.M."/>
        </authorList>
    </citation>
    <scope>NUCLEOTIDE SEQUENCE [LARGE SCALE GENOMIC DNA]</scope>
    <source>
        <strain>ATCC 19089 / CIP 103742 / CB 15</strain>
    </source>
</reference>
<comment type="cofactor">
    <cofactor evidence="2">
        <name>Zn(2+)</name>
        <dbReference type="ChEBI" id="CHEBI:29105"/>
    </cofactor>
    <text evidence="2">Binds 1 zinc ion per subunit.</text>
</comment>
<comment type="similarity">
    <text evidence="2">Belongs to the aldolase class II family.</text>
</comment>
<comment type="sequence caution" evidence="2">
    <conflict type="erroneous initiation">
        <sequence resource="EMBL-CDS" id="AAK23184"/>
    </conflict>
</comment>
<proteinExistence type="inferred from homology"/>
<gene>
    <name type="ordered locus">CC_1201</name>
</gene>
<dbReference type="EMBL" id="AE005673">
    <property type="protein sequence ID" value="AAK23184.1"/>
    <property type="status" value="ALT_INIT"/>
    <property type="molecule type" value="Genomic_DNA"/>
</dbReference>
<dbReference type="PIR" id="D87398">
    <property type="entry name" value="D87398"/>
</dbReference>
<dbReference type="RefSeq" id="NP_420016.1">
    <property type="nucleotide sequence ID" value="NC_002696.2"/>
</dbReference>
<dbReference type="RefSeq" id="WP_012640174.1">
    <property type="nucleotide sequence ID" value="NC_002696.2"/>
</dbReference>
<dbReference type="SMR" id="Q9A8Z4"/>
<dbReference type="STRING" id="190650.CC_1201"/>
<dbReference type="EnsemblBacteria" id="AAK23184">
    <property type="protein sequence ID" value="AAK23184"/>
    <property type="gene ID" value="CC_1201"/>
</dbReference>
<dbReference type="KEGG" id="ccr:CC_1201"/>
<dbReference type="PATRIC" id="fig|190650.5.peg.1225"/>
<dbReference type="eggNOG" id="COG0235">
    <property type="taxonomic scope" value="Bacteria"/>
</dbReference>
<dbReference type="HOGENOM" id="CLU_006033_0_0_5"/>
<dbReference type="Proteomes" id="UP000001816">
    <property type="component" value="Chromosome"/>
</dbReference>
<dbReference type="GO" id="GO:0005856">
    <property type="term" value="C:cytoskeleton"/>
    <property type="evidence" value="ECO:0007669"/>
    <property type="project" value="TreeGrafter"/>
</dbReference>
<dbReference type="GO" id="GO:0051015">
    <property type="term" value="F:actin filament binding"/>
    <property type="evidence" value="ECO:0007669"/>
    <property type="project" value="TreeGrafter"/>
</dbReference>
<dbReference type="GO" id="GO:0046872">
    <property type="term" value="F:metal ion binding"/>
    <property type="evidence" value="ECO:0007669"/>
    <property type="project" value="UniProtKB-KW"/>
</dbReference>
<dbReference type="Gene3D" id="3.40.225.10">
    <property type="entry name" value="Class II aldolase/adducin N-terminal domain"/>
    <property type="match status" value="1"/>
</dbReference>
<dbReference type="InterPro" id="IPR051017">
    <property type="entry name" value="Aldolase-II_Adducin_sf"/>
</dbReference>
<dbReference type="InterPro" id="IPR001303">
    <property type="entry name" value="Aldolase_II/adducin_N"/>
</dbReference>
<dbReference type="InterPro" id="IPR036409">
    <property type="entry name" value="Aldolase_II/adducin_N_sf"/>
</dbReference>
<dbReference type="NCBIfam" id="NF005451">
    <property type="entry name" value="PRK07044.1"/>
    <property type="match status" value="1"/>
</dbReference>
<dbReference type="PANTHER" id="PTHR10672">
    <property type="entry name" value="ADDUCIN"/>
    <property type="match status" value="1"/>
</dbReference>
<dbReference type="PANTHER" id="PTHR10672:SF3">
    <property type="entry name" value="PROTEIN HU-LI TAI SHAO"/>
    <property type="match status" value="1"/>
</dbReference>
<dbReference type="Pfam" id="PF00596">
    <property type="entry name" value="Aldolase_II"/>
    <property type="match status" value="1"/>
</dbReference>
<dbReference type="SMART" id="SM01007">
    <property type="entry name" value="Aldolase_II"/>
    <property type="match status" value="1"/>
</dbReference>
<dbReference type="SUPFAM" id="SSF53639">
    <property type="entry name" value="AraD/HMP-PK domain-like"/>
    <property type="match status" value="1"/>
</dbReference>
<organism>
    <name type="scientific">Caulobacter vibrioides (strain ATCC 19089 / CIP 103742 / CB 15)</name>
    <name type="common">Caulobacter crescentus</name>
    <dbReference type="NCBI Taxonomy" id="190650"/>
    <lineage>
        <taxon>Bacteria</taxon>
        <taxon>Pseudomonadati</taxon>
        <taxon>Pseudomonadota</taxon>
        <taxon>Alphaproteobacteria</taxon>
        <taxon>Caulobacterales</taxon>
        <taxon>Caulobacteraceae</taxon>
        <taxon>Caulobacter</taxon>
    </lineage>
</organism>
<evidence type="ECO:0000250" key="1"/>
<evidence type="ECO:0000305" key="2"/>
<sequence length="257" mass="28222">MADGALPTMSLKGKVSEAEWQARVDLAALYRLVALHGWDDMIFTHISARIPGPEHHFLINPYGMFFGEITASSLVKVDLEGNVIDKTPYYINPAGFTIHSAVHAAREDAHYVMHLHSDQGVAVSAHKEGLLPLTQHSLIVLPQLAYHDYEGIALNLEERERIVADLGQKKLLMLRNHGTLSVGATAAECWLGMFFLERACAQQVMALSIGRDNVLLAPEAAQDEVRKQIGMGMGMIGGLAWPGCLRKLDRESPGYAD</sequence>
<accession>Q9A8Z4</accession>